<evidence type="ECO:0000255" key="1"/>
<evidence type="ECO:0000255" key="2">
    <source>
        <dbReference type="PROSITE-ProRule" id="PRU00114"/>
    </source>
</evidence>
<evidence type="ECO:0000305" key="3"/>
<gene>
    <name type="primary">H2-Q8</name>
</gene>
<organism>
    <name type="scientific">Mus musculus</name>
    <name type="common">Mouse</name>
    <dbReference type="NCBI Taxonomy" id="10090"/>
    <lineage>
        <taxon>Eukaryota</taxon>
        <taxon>Metazoa</taxon>
        <taxon>Chordata</taxon>
        <taxon>Craniata</taxon>
        <taxon>Vertebrata</taxon>
        <taxon>Euteleostomi</taxon>
        <taxon>Mammalia</taxon>
        <taxon>Eutheria</taxon>
        <taxon>Euarchontoglires</taxon>
        <taxon>Glires</taxon>
        <taxon>Rodentia</taxon>
        <taxon>Myomorpha</taxon>
        <taxon>Muroidea</taxon>
        <taxon>Muridae</taxon>
        <taxon>Murinae</taxon>
        <taxon>Mus</taxon>
        <taxon>Mus</taxon>
    </lineage>
</organism>
<protein>
    <recommendedName>
        <fullName>H-2 class I histocompatibility antigen, Q8 alpha chain</fullName>
    </recommendedName>
</protein>
<keyword id="KW-1015">Disulfide bond</keyword>
<keyword id="KW-0325">Glycoprotein</keyword>
<keyword id="KW-0391">Immunity</keyword>
<keyword id="KW-0472">Membrane</keyword>
<keyword id="KW-0490">MHC I</keyword>
<keyword id="KW-1185">Reference proteome</keyword>
<keyword id="KW-0732">Signal</keyword>
<keyword id="KW-0812">Transmembrane</keyword>
<keyword id="KW-1133">Transmembrane helix</keyword>
<accession>P14430</accession>
<comment type="function">
    <text>Involved in the presentation of foreign antigens to the immune system.</text>
</comment>
<comment type="subunit">
    <text>Heterodimer of an alpha chain and a beta chain (beta-2-microglobulin).</text>
</comment>
<comment type="subcellular location">
    <subcellularLocation>
        <location>Membrane</location>
        <topology>Single-pass type I membrane protein</topology>
    </subcellularLocation>
</comment>
<comment type="similarity">
    <text evidence="3">Belongs to the MHC class I family.</text>
</comment>
<sequence length="326" mass="37411">MALTMLLLLVAAALTLIETRAGPHSLRYFHTAVSWPGLVEPRFIIVGYVDDTQFVRFDSDAENPRMEPRARWMEQEGPEYWERETQKAKGHEESFRVSLRTAQRYYNQSKGGSHTLQWMYGCDVGSDERLLRGYLQFAYEGRDYIALNEDLKTWTAADMAAQITLHKWEQAGIAERDRAYLEGACVQSLRRYLQLRKETLLCTDPPKAHVTHHPRSYGAVTLRCWALGFYPADITLTWQLNGEELTQDMELVETRPAGDGTFQKWASVVVPLGKEQNYTCHVNHEGLPEPLTLRWEPPPSTVSNMANVAILVVLVAWPSLELWWIL</sequence>
<reference key="1">
    <citation type="journal article" date="1985" name="EMBO J.">
        <title>Duplicated gene pairs and alleles of class I genes in the Qa2 region of the murine major histocompatibility complex: a comparison.</title>
        <authorList>
            <person name="Devlin J.J."/>
            <person name="Weiss E.H."/>
            <person name="Paulson M."/>
            <person name="Flavell R.A."/>
        </authorList>
    </citation>
    <scope>NUCLEOTIDE SEQUENCE [GENOMIC DNA]</scope>
    <source>
        <strain>C57BL/10</strain>
    </source>
</reference>
<name>HA18_MOUSE</name>
<feature type="signal peptide">
    <location>
        <begin position="1"/>
        <end position="21"/>
    </location>
</feature>
<feature type="chain" id="PRO_0000018934" description="H-2 class I histocompatibility antigen, Q8 alpha chain">
    <location>
        <begin position="22"/>
        <end position="326"/>
    </location>
</feature>
<feature type="topological domain" description="Extracellular" evidence="1">
    <location>
        <begin position="22"/>
        <end position="305"/>
    </location>
</feature>
<feature type="transmembrane region" description="Helical" evidence="1">
    <location>
        <begin position="306"/>
        <end position="326"/>
    </location>
</feature>
<feature type="domain" description="Ig-like C1-type">
    <location>
        <begin position="206"/>
        <end position="294"/>
    </location>
</feature>
<feature type="region of interest" description="Alpha-1">
    <location>
        <begin position="22"/>
        <end position="111"/>
    </location>
</feature>
<feature type="region of interest" description="Alpha-2">
    <location>
        <begin position="112"/>
        <end position="203"/>
    </location>
</feature>
<feature type="region of interest" description="Alpha-3">
    <location>
        <begin position="204"/>
        <end position="295"/>
    </location>
</feature>
<feature type="region of interest" description="Connecting peptide">
    <location>
        <begin position="296"/>
        <end position="305"/>
    </location>
</feature>
<feature type="glycosylation site" description="N-linked (GlcNAc...) asparagine" evidence="1">
    <location>
        <position position="107"/>
    </location>
</feature>
<feature type="glycosylation site" description="N-linked (GlcNAc...) asparagine" evidence="1">
    <location>
        <position position="277"/>
    </location>
</feature>
<feature type="disulfide bond" evidence="2">
    <location>
        <begin position="122"/>
        <end position="185"/>
    </location>
</feature>
<feature type="disulfide bond" evidence="2">
    <location>
        <begin position="224"/>
        <end position="280"/>
    </location>
</feature>
<proteinExistence type="inferred from homology"/>
<dbReference type="EMBL" id="X03211">
    <property type="protein sequence ID" value="CAA26955.1"/>
    <property type="molecule type" value="Genomic_DNA"/>
</dbReference>
<dbReference type="EMBL" id="X03442">
    <property type="protein sequence ID" value="CAA27171.1"/>
    <property type="molecule type" value="Genomic_DNA"/>
</dbReference>
<dbReference type="PIR" id="B24582">
    <property type="entry name" value="B24582"/>
</dbReference>
<dbReference type="SMR" id="P14430"/>
<dbReference type="FunCoup" id="P14430">
    <property type="interactions" value="126"/>
</dbReference>
<dbReference type="STRING" id="10090.ENSMUSP00000134550"/>
<dbReference type="GlyCosmos" id="P14430">
    <property type="glycosylation" value="2 sites, No reported glycans"/>
</dbReference>
<dbReference type="GlyGen" id="P14430">
    <property type="glycosylation" value="2 sites"/>
</dbReference>
<dbReference type="iPTMnet" id="P14430"/>
<dbReference type="PhosphoSitePlus" id="P14430"/>
<dbReference type="jPOST" id="P14430"/>
<dbReference type="PaxDb" id="10090-ENSMUSP00000134550"/>
<dbReference type="PeptideAtlas" id="P14430"/>
<dbReference type="ProteomicsDB" id="270922"/>
<dbReference type="UCSC" id="uc008chr.1">
    <property type="organism name" value="mouse"/>
</dbReference>
<dbReference type="AGR" id="MGI:95937"/>
<dbReference type="MGI" id="MGI:95937">
    <property type="gene designation" value="H2-Q8"/>
</dbReference>
<dbReference type="eggNOG" id="ENOG502RQEK">
    <property type="taxonomic scope" value="Eukaryota"/>
</dbReference>
<dbReference type="InParanoid" id="P14430"/>
<dbReference type="PhylomeDB" id="P14430"/>
<dbReference type="PRO" id="PR:P14430"/>
<dbReference type="Proteomes" id="UP000000589">
    <property type="component" value="Unplaced"/>
</dbReference>
<dbReference type="RNAct" id="P14430">
    <property type="molecule type" value="protein"/>
</dbReference>
<dbReference type="GO" id="GO:0098553">
    <property type="term" value="C:lumenal side of endoplasmic reticulum membrane"/>
    <property type="evidence" value="ECO:0000304"/>
    <property type="project" value="Reactome"/>
</dbReference>
<dbReference type="GO" id="GO:0042612">
    <property type="term" value="C:MHC class I protein complex"/>
    <property type="evidence" value="ECO:0007669"/>
    <property type="project" value="UniProtKB-KW"/>
</dbReference>
<dbReference type="GO" id="GO:0030670">
    <property type="term" value="C:phagocytic vesicle membrane"/>
    <property type="evidence" value="ECO:0000304"/>
    <property type="project" value="Reactome"/>
</dbReference>
<dbReference type="GO" id="GO:0002474">
    <property type="term" value="P:antigen processing and presentation of peptide antigen via MHC class I"/>
    <property type="evidence" value="ECO:0007669"/>
    <property type="project" value="UniProtKB-KW"/>
</dbReference>
<dbReference type="CDD" id="cd21014">
    <property type="entry name" value="IgC1_MHC_Ib_Qa-2"/>
    <property type="match status" value="1"/>
</dbReference>
<dbReference type="FunFam" id="2.60.40.10:FF:000014">
    <property type="entry name" value="H-2 class I histocompatibility antigen, alpha chain"/>
    <property type="match status" value="1"/>
</dbReference>
<dbReference type="FunFam" id="3.30.500.10:FF:000001">
    <property type="entry name" value="H-2 class I histocompatibility antigen, alpha chain"/>
    <property type="match status" value="1"/>
</dbReference>
<dbReference type="Gene3D" id="2.60.40.10">
    <property type="entry name" value="Immunoglobulins"/>
    <property type="match status" value="1"/>
</dbReference>
<dbReference type="Gene3D" id="3.30.500.10">
    <property type="entry name" value="MHC class I-like antigen recognition-like"/>
    <property type="match status" value="1"/>
</dbReference>
<dbReference type="InterPro" id="IPR007110">
    <property type="entry name" value="Ig-like_dom"/>
</dbReference>
<dbReference type="InterPro" id="IPR036179">
    <property type="entry name" value="Ig-like_dom_sf"/>
</dbReference>
<dbReference type="InterPro" id="IPR013783">
    <property type="entry name" value="Ig-like_fold"/>
</dbReference>
<dbReference type="InterPro" id="IPR003006">
    <property type="entry name" value="Ig/MHC_CS"/>
</dbReference>
<dbReference type="InterPro" id="IPR003597">
    <property type="entry name" value="Ig_C1-set"/>
</dbReference>
<dbReference type="InterPro" id="IPR050208">
    <property type="entry name" value="MHC_class-I_related"/>
</dbReference>
<dbReference type="InterPro" id="IPR011161">
    <property type="entry name" value="MHC_I-like_Ag-recog"/>
</dbReference>
<dbReference type="InterPro" id="IPR037055">
    <property type="entry name" value="MHC_I-like_Ag-recog_sf"/>
</dbReference>
<dbReference type="InterPro" id="IPR011162">
    <property type="entry name" value="MHC_I/II-like_Ag-recog"/>
</dbReference>
<dbReference type="InterPro" id="IPR001039">
    <property type="entry name" value="MHC_I_a_a1/a2"/>
</dbReference>
<dbReference type="PANTHER" id="PTHR16675:SF251">
    <property type="entry name" value="HLA CLASS I HISTOCOMPATIBILITY ANTIGEN, C ALPHA CHAIN"/>
    <property type="match status" value="1"/>
</dbReference>
<dbReference type="PANTHER" id="PTHR16675">
    <property type="entry name" value="MHC CLASS I-RELATED"/>
    <property type="match status" value="1"/>
</dbReference>
<dbReference type="Pfam" id="PF07654">
    <property type="entry name" value="C1-set"/>
    <property type="match status" value="1"/>
</dbReference>
<dbReference type="Pfam" id="PF00129">
    <property type="entry name" value="MHC_I"/>
    <property type="match status" value="1"/>
</dbReference>
<dbReference type="PRINTS" id="PR01638">
    <property type="entry name" value="MHCCLASSI"/>
</dbReference>
<dbReference type="SMART" id="SM00407">
    <property type="entry name" value="IGc1"/>
    <property type="match status" value="1"/>
</dbReference>
<dbReference type="SUPFAM" id="SSF48726">
    <property type="entry name" value="Immunoglobulin"/>
    <property type="match status" value="1"/>
</dbReference>
<dbReference type="SUPFAM" id="SSF54452">
    <property type="entry name" value="MHC antigen-recognition domain"/>
    <property type="match status" value="1"/>
</dbReference>
<dbReference type="PROSITE" id="PS50835">
    <property type="entry name" value="IG_LIKE"/>
    <property type="match status" value="1"/>
</dbReference>
<dbReference type="PROSITE" id="PS00290">
    <property type="entry name" value="IG_MHC"/>
    <property type="match status" value="1"/>
</dbReference>